<dbReference type="EC" id="2.7.11.24"/>
<dbReference type="EMBL" id="AC061957">
    <property type="protein sequence ID" value="AAF81314.1"/>
    <property type="molecule type" value="Genomic_DNA"/>
</dbReference>
<dbReference type="EMBL" id="CP002684">
    <property type="protein sequence ID" value="AEE27305.1"/>
    <property type="molecule type" value="Genomic_DNA"/>
</dbReference>
<dbReference type="EMBL" id="CP002684">
    <property type="protein sequence ID" value="AEE27306.1"/>
    <property type="molecule type" value="Genomic_DNA"/>
</dbReference>
<dbReference type="EMBL" id="CP002684">
    <property type="protein sequence ID" value="ANM59779.1"/>
    <property type="molecule type" value="Genomic_DNA"/>
</dbReference>
<dbReference type="EMBL" id="BX815051">
    <property type="status" value="NOT_ANNOTATED_CDS"/>
    <property type="molecule type" value="mRNA"/>
</dbReference>
<dbReference type="PIR" id="C86146">
    <property type="entry name" value="C86146"/>
</dbReference>
<dbReference type="RefSeq" id="NP_001117210.1">
    <molecule id="Q9LMM5-1"/>
    <property type="nucleotide sequence ID" value="NM_001123738.2"/>
</dbReference>
<dbReference type="RefSeq" id="NP_001322113.1">
    <molecule id="Q9LMM5-2"/>
    <property type="nucleotide sequence ID" value="NM_001331282.1"/>
</dbReference>
<dbReference type="RefSeq" id="NP_563631.2">
    <molecule id="Q9LMM5-2"/>
    <property type="nucleotide sequence ID" value="NM_100038.4"/>
</dbReference>
<dbReference type="SMR" id="Q9LMM5"/>
<dbReference type="BioGRID" id="24758">
    <property type="interactions" value="3"/>
</dbReference>
<dbReference type="FunCoup" id="Q9LMM5">
    <property type="interactions" value="2208"/>
</dbReference>
<dbReference type="IntAct" id="Q9LMM5">
    <property type="interactions" value="4"/>
</dbReference>
<dbReference type="STRING" id="3702.Q9LMM5"/>
<dbReference type="iPTMnet" id="Q9LMM5"/>
<dbReference type="PaxDb" id="3702-AT1G01560.2"/>
<dbReference type="ProteomicsDB" id="250948">
    <molecule id="Q9LMM5-1"/>
</dbReference>
<dbReference type="EnsemblPlants" id="AT1G01560.1">
    <molecule id="Q9LMM5-2"/>
    <property type="protein sequence ID" value="AT1G01560.1"/>
    <property type="gene ID" value="AT1G01560"/>
</dbReference>
<dbReference type="EnsemblPlants" id="AT1G01560.2">
    <molecule id="Q9LMM5-1"/>
    <property type="protein sequence ID" value="AT1G01560.2"/>
    <property type="gene ID" value="AT1G01560"/>
</dbReference>
<dbReference type="EnsemblPlants" id="AT1G01560.4">
    <molecule id="Q9LMM5-2"/>
    <property type="protein sequence ID" value="AT1G01560.4"/>
    <property type="gene ID" value="AT1G01560"/>
</dbReference>
<dbReference type="GeneID" id="839523"/>
<dbReference type="Gramene" id="AT1G01560.1">
    <molecule id="Q9LMM5-2"/>
    <property type="protein sequence ID" value="AT1G01560.1"/>
    <property type="gene ID" value="AT1G01560"/>
</dbReference>
<dbReference type="Gramene" id="AT1G01560.2">
    <molecule id="Q9LMM5-1"/>
    <property type="protein sequence ID" value="AT1G01560.2"/>
    <property type="gene ID" value="AT1G01560"/>
</dbReference>
<dbReference type="Gramene" id="AT1G01560.4">
    <molecule id="Q9LMM5-2"/>
    <property type="protein sequence ID" value="AT1G01560.4"/>
    <property type="gene ID" value="AT1G01560"/>
</dbReference>
<dbReference type="KEGG" id="ath:AT1G01560"/>
<dbReference type="Araport" id="AT1G01560"/>
<dbReference type="TAIR" id="AT1G01560">
    <property type="gene designation" value="MPK11"/>
</dbReference>
<dbReference type="eggNOG" id="KOG0660">
    <property type="taxonomic scope" value="Eukaryota"/>
</dbReference>
<dbReference type="InParanoid" id="Q9LMM5"/>
<dbReference type="OMA" id="FMTQYVS"/>
<dbReference type="PhylomeDB" id="Q9LMM5"/>
<dbReference type="PRO" id="PR:Q9LMM5"/>
<dbReference type="Proteomes" id="UP000006548">
    <property type="component" value="Chromosome 1"/>
</dbReference>
<dbReference type="ExpressionAtlas" id="Q9LMM5">
    <property type="expression patterns" value="baseline and differential"/>
</dbReference>
<dbReference type="GO" id="GO:0005829">
    <property type="term" value="C:cytosol"/>
    <property type="evidence" value="ECO:0007005"/>
    <property type="project" value="TAIR"/>
</dbReference>
<dbReference type="GO" id="GO:0005524">
    <property type="term" value="F:ATP binding"/>
    <property type="evidence" value="ECO:0007669"/>
    <property type="project" value="UniProtKB-KW"/>
</dbReference>
<dbReference type="GO" id="GO:0004707">
    <property type="term" value="F:MAP kinase activity"/>
    <property type="evidence" value="ECO:0000250"/>
    <property type="project" value="TAIR"/>
</dbReference>
<dbReference type="GO" id="GO:0106310">
    <property type="term" value="F:protein serine kinase activity"/>
    <property type="evidence" value="ECO:0007669"/>
    <property type="project" value="RHEA"/>
</dbReference>
<dbReference type="GO" id="GO:0009737">
    <property type="term" value="P:response to abscisic acid"/>
    <property type="evidence" value="ECO:0000270"/>
    <property type="project" value="TAIR"/>
</dbReference>
<dbReference type="CDD" id="cd07858">
    <property type="entry name" value="STKc_TEY_MAPK"/>
    <property type="match status" value="1"/>
</dbReference>
<dbReference type="FunFam" id="1.10.510.10:FF:000013">
    <property type="entry name" value="Mitogen-activated protein kinase"/>
    <property type="match status" value="1"/>
</dbReference>
<dbReference type="FunFam" id="3.30.200.20:FF:000046">
    <property type="entry name" value="Mitogen-activated protein kinase"/>
    <property type="match status" value="1"/>
</dbReference>
<dbReference type="Gene3D" id="3.30.200.20">
    <property type="entry name" value="Phosphorylase Kinase, domain 1"/>
    <property type="match status" value="1"/>
</dbReference>
<dbReference type="Gene3D" id="1.10.510.10">
    <property type="entry name" value="Transferase(Phosphotransferase) domain 1"/>
    <property type="match status" value="1"/>
</dbReference>
<dbReference type="InterPro" id="IPR011009">
    <property type="entry name" value="Kinase-like_dom_sf"/>
</dbReference>
<dbReference type="InterPro" id="IPR050117">
    <property type="entry name" value="MAP_kinase"/>
</dbReference>
<dbReference type="InterPro" id="IPR003527">
    <property type="entry name" value="MAP_kinase_CS"/>
</dbReference>
<dbReference type="InterPro" id="IPR000719">
    <property type="entry name" value="Prot_kinase_dom"/>
</dbReference>
<dbReference type="InterPro" id="IPR017441">
    <property type="entry name" value="Protein_kinase_ATP_BS"/>
</dbReference>
<dbReference type="InterPro" id="IPR008271">
    <property type="entry name" value="Ser/Thr_kinase_AS"/>
</dbReference>
<dbReference type="PANTHER" id="PTHR24055">
    <property type="entry name" value="MITOGEN-ACTIVATED PROTEIN KINASE"/>
    <property type="match status" value="1"/>
</dbReference>
<dbReference type="Pfam" id="PF00069">
    <property type="entry name" value="Pkinase"/>
    <property type="match status" value="1"/>
</dbReference>
<dbReference type="SMART" id="SM00220">
    <property type="entry name" value="S_TKc"/>
    <property type="match status" value="1"/>
</dbReference>
<dbReference type="SUPFAM" id="SSF56112">
    <property type="entry name" value="Protein kinase-like (PK-like)"/>
    <property type="match status" value="1"/>
</dbReference>
<dbReference type="PROSITE" id="PS01351">
    <property type="entry name" value="MAPK"/>
    <property type="match status" value="1"/>
</dbReference>
<dbReference type="PROSITE" id="PS00107">
    <property type="entry name" value="PROTEIN_KINASE_ATP"/>
    <property type="match status" value="1"/>
</dbReference>
<dbReference type="PROSITE" id="PS50011">
    <property type="entry name" value="PROTEIN_KINASE_DOM"/>
    <property type="match status" value="1"/>
</dbReference>
<dbReference type="PROSITE" id="PS00108">
    <property type="entry name" value="PROTEIN_KINASE_ST"/>
    <property type="match status" value="1"/>
</dbReference>
<name>MPK11_ARATH</name>
<protein>
    <recommendedName>
        <fullName>Mitogen-activated protein kinase 11</fullName>
        <shortName>AtMPK11</shortName>
        <shortName>MAP kinase 11</shortName>
        <ecNumber>2.7.11.24</ecNumber>
    </recommendedName>
</protein>
<comment type="catalytic activity">
    <reaction>
        <text>L-seryl-[protein] + ATP = O-phospho-L-seryl-[protein] + ADP + H(+)</text>
        <dbReference type="Rhea" id="RHEA:17989"/>
        <dbReference type="Rhea" id="RHEA-COMP:9863"/>
        <dbReference type="Rhea" id="RHEA-COMP:11604"/>
        <dbReference type="ChEBI" id="CHEBI:15378"/>
        <dbReference type="ChEBI" id="CHEBI:29999"/>
        <dbReference type="ChEBI" id="CHEBI:30616"/>
        <dbReference type="ChEBI" id="CHEBI:83421"/>
        <dbReference type="ChEBI" id="CHEBI:456216"/>
        <dbReference type="EC" id="2.7.11.24"/>
    </reaction>
</comment>
<comment type="catalytic activity">
    <reaction>
        <text>L-threonyl-[protein] + ATP = O-phospho-L-threonyl-[protein] + ADP + H(+)</text>
        <dbReference type="Rhea" id="RHEA:46608"/>
        <dbReference type="Rhea" id="RHEA-COMP:11060"/>
        <dbReference type="Rhea" id="RHEA-COMP:11605"/>
        <dbReference type="ChEBI" id="CHEBI:15378"/>
        <dbReference type="ChEBI" id="CHEBI:30013"/>
        <dbReference type="ChEBI" id="CHEBI:30616"/>
        <dbReference type="ChEBI" id="CHEBI:61977"/>
        <dbReference type="ChEBI" id="CHEBI:456216"/>
        <dbReference type="EC" id="2.7.11.24"/>
    </reaction>
</comment>
<comment type="activity regulation">
    <text evidence="1">Activated by threonine and tyrosine phosphorylation.</text>
</comment>
<comment type="subunit">
    <text evidence="5 6">Interacts with MKK1, MKK2 and MKK6.</text>
</comment>
<comment type="interaction">
    <interactant intactId="EBI-2358699">
        <id>Q9LMM5</id>
    </interactant>
    <interactant intactId="EBI-994464">
        <id>Q94A06</id>
        <label>MKK1</label>
    </interactant>
    <organismsDiffer>false</organismsDiffer>
    <experiments>2</experiments>
</comment>
<comment type="interaction">
    <interactant intactId="EBI-2358699">
        <id>Q9LMM5</id>
    </interactant>
    <interactant intactId="EBI-994350">
        <id>Q9S7U9</id>
        <label>MKK2</label>
    </interactant>
    <organismsDiffer>false</organismsDiffer>
    <experiments>2</experiments>
</comment>
<comment type="interaction">
    <interactant intactId="EBI-2358699">
        <id>Q9LMM5</id>
    </interactant>
    <interactant intactId="EBI-2130809">
        <id>Q9M4B5</id>
        <label>PFD4</label>
    </interactant>
    <organismsDiffer>false</organismsDiffer>
    <experiments>3</experiments>
</comment>
<comment type="alternative products">
    <event type="alternative splicing"/>
    <isoform>
        <id>Q9LMM5-1</id>
        <name>1</name>
        <sequence type="displayed"/>
    </isoform>
    <isoform>
        <id>Q9LMM5-2</id>
        <name>2</name>
        <sequence type="described" ref="VSP_035539 VSP_035540"/>
    </isoform>
</comment>
<comment type="domain">
    <text>The TXY motif contains the threonine and tyrosine residues whose phosphorylation activates the MAP kinases.</text>
</comment>
<comment type="PTM">
    <text evidence="1">Dually phosphorylated on Thr-198 and Tyr-200, which activates the enzyme.</text>
</comment>
<comment type="miscellaneous">
    <molecule>Isoform 2</molecule>
    <text evidence="8">May be due to introns retention.</text>
</comment>
<comment type="similarity">
    <text evidence="8">Belongs to the protein kinase superfamily. CMGC Ser/Thr protein kinase family. MAP kinase subfamily.</text>
</comment>
<keyword id="KW-0025">Alternative splicing</keyword>
<keyword id="KW-0067">ATP-binding</keyword>
<keyword id="KW-0418">Kinase</keyword>
<keyword id="KW-0547">Nucleotide-binding</keyword>
<keyword id="KW-0597">Phosphoprotein</keyword>
<keyword id="KW-1185">Reference proteome</keyword>
<keyword id="KW-0723">Serine/threonine-protein kinase</keyword>
<keyword id="KW-0808">Transferase</keyword>
<proteinExistence type="evidence at protein level"/>
<sequence length="369" mass="42475">MSIEKPFFGDDSNRGVSINGGRYVQYNVYGNLFEVSKKYVPPLRPIGRGASGIVCAAWNSETGEEVAIKKIGNAFGNIIDAKRTLREIKLLKHMDHDNVIAIIDIIRPPQPDNFNDVHIVYELMDTDLHHIIRSNQPLTDDHSRFFLYQLLRGLKYVHSANVLHRDLKPSNLLLNANCDLKIGDFGLARTKSETDFMTEYVVTRWYRAPELLLNCSEYTAAIDIWSVGCILGEIMTREPLFPGRDYVQQLRLITELIGSPDDSSLGFLRSDNARRYVRQLPQYPRQNFAARFPNMSVNAVDLLQKMLVFDPNRRITVDEALCHPYLAPLHEYNEEPVCVRPFHFDFEQPSLTEENIKELIYRESVKFNP</sequence>
<accession>Q9LMM5</accession>
<accession>B3H762</accession>
<feature type="chain" id="PRO_0000245811" description="Mitogen-activated protein kinase 11">
    <location>
        <begin position="1"/>
        <end position="369"/>
    </location>
</feature>
<feature type="domain" description="Protein kinase" evidence="3">
    <location>
        <begin position="40"/>
        <end position="326"/>
    </location>
</feature>
<feature type="short sequence motif" description="TXY">
    <location>
        <begin position="198"/>
        <end position="200"/>
    </location>
</feature>
<feature type="active site" description="Proton acceptor" evidence="3 4">
    <location>
        <position position="166"/>
    </location>
</feature>
<feature type="binding site" evidence="3">
    <location>
        <begin position="46"/>
        <end position="54"/>
    </location>
    <ligand>
        <name>ATP</name>
        <dbReference type="ChEBI" id="CHEBI:30616"/>
    </ligand>
</feature>
<feature type="binding site" evidence="3">
    <location>
        <position position="69"/>
    </location>
    <ligand>
        <name>ATP</name>
        <dbReference type="ChEBI" id="CHEBI:30616"/>
    </ligand>
</feature>
<feature type="modified residue" description="Phosphothreonine" evidence="2">
    <location>
        <position position="198"/>
    </location>
</feature>
<feature type="modified residue" description="Phosphotyrosine" evidence="2">
    <location>
        <position position="200"/>
    </location>
</feature>
<feature type="modified residue" description="Phosphothreonine" evidence="2">
    <location>
        <position position="203"/>
    </location>
</feature>
<feature type="splice variant" id="VSP_035539" description="In isoform 2." evidence="7">
    <original>LIGSPDDSSLGFLRSDNARR</original>
    <variation>VNFSLFHLTILFRFNLKKEH</variation>
    <location>
        <begin position="256"/>
        <end position="275"/>
    </location>
</feature>
<feature type="splice variant" id="VSP_035540" description="In isoform 2." evidence="7">
    <location>
        <begin position="276"/>
        <end position="369"/>
    </location>
</feature>
<feature type="sequence conflict" description="In Ref. 3; BX815051." evidence="8" ref="3">
    <original>N</original>
    <variation>D</variation>
    <location>
        <position position="13"/>
    </location>
</feature>
<gene>
    <name type="primary">MPK11</name>
    <name type="ordered locus">At1g01560</name>
    <name type="ORF">F22L4.10</name>
</gene>
<reference key="1">
    <citation type="journal article" date="2000" name="Nature">
        <title>Sequence and analysis of chromosome 1 of the plant Arabidopsis thaliana.</title>
        <authorList>
            <person name="Theologis A."/>
            <person name="Ecker J.R."/>
            <person name="Palm C.J."/>
            <person name="Federspiel N.A."/>
            <person name="Kaul S."/>
            <person name="White O."/>
            <person name="Alonso J."/>
            <person name="Altafi H."/>
            <person name="Araujo R."/>
            <person name="Bowman C.L."/>
            <person name="Brooks S.Y."/>
            <person name="Buehler E."/>
            <person name="Chan A."/>
            <person name="Chao Q."/>
            <person name="Chen H."/>
            <person name="Cheuk R.F."/>
            <person name="Chin C.W."/>
            <person name="Chung M.K."/>
            <person name="Conn L."/>
            <person name="Conway A.B."/>
            <person name="Conway A.R."/>
            <person name="Creasy T.H."/>
            <person name="Dewar K."/>
            <person name="Dunn P."/>
            <person name="Etgu P."/>
            <person name="Feldblyum T.V."/>
            <person name="Feng J.-D."/>
            <person name="Fong B."/>
            <person name="Fujii C.Y."/>
            <person name="Gill J.E."/>
            <person name="Goldsmith A.D."/>
            <person name="Haas B."/>
            <person name="Hansen N.F."/>
            <person name="Hughes B."/>
            <person name="Huizar L."/>
            <person name="Hunter J.L."/>
            <person name="Jenkins J."/>
            <person name="Johnson-Hopson C."/>
            <person name="Khan S."/>
            <person name="Khaykin E."/>
            <person name="Kim C.J."/>
            <person name="Koo H.L."/>
            <person name="Kremenetskaia I."/>
            <person name="Kurtz D.B."/>
            <person name="Kwan A."/>
            <person name="Lam B."/>
            <person name="Langin-Hooper S."/>
            <person name="Lee A."/>
            <person name="Lee J.M."/>
            <person name="Lenz C.A."/>
            <person name="Li J.H."/>
            <person name="Li Y.-P."/>
            <person name="Lin X."/>
            <person name="Liu S.X."/>
            <person name="Liu Z.A."/>
            <person name="Luros J.S."/>
            <person name="Maiti R."/>
            <person name="Marziali A."/>
            <person name="Militscher J."/>
            <person name="Miranda M."/>
            <person name="Nguyen M."/>
            <person name="Nierman W.C."/>
            <person name="Osborne B.I."/>
            <person name="Pai G."/>
            <person name="Peterson J."/>
            <person name="Pham P.K."/>
            <person name="Rizzo M."/>
            <person name="Rooney T."/>
            <person name="Rowley D."/>
            <person name="Sakano H."/>
            <person name="Salzberg S.L."/>
            <person name="Schwartz J.R."/>
            <person name="Shinn P."/>
            <person name="Southwick A.M."/>
            <person name="Sun H."/>
            <person name="Tallon L.J."/>
            <person name="Tambunga G."/>
            <person name="Toriumi M.J."/>
            <person name="Town C.D."/>
            <person name="Utterback T."/>
            <person name="Van Aken S."/>
            <person name="Vaysberg M."/>
            <person name="Vysotskaia V.S."/>
            <person name="Walker M."/>
            <person name="Wu D."/>
            <person name="Yu G."/>
            <person name="Fraser C.M."/>
            <person name="Venter J.C."/>
            <person name="Davis R.W."/>
        </authorList>
    </citation>
    <scope>NUCLEOTIDE SEQUENCE [LARGE SCALE GENOMIC DNA]</scope>
    <source>
        <strain>cv. Columbia</strain>
    </source>
</reference>
<reference key="2">
    <citation type="journal article" date="2017" name="Plant J.">
        <title>Araport11: a complete reannotation of the Arabidopsis thaliana reference genome.</title>
        <authorList>
            <person name="Cheng C.Y."/>
            <person name="Krishnakumar V."/>
            <person name="Chan A.P."/>
            <person name="Thibaud-Nissen F."/>
            <person name="Schobel S."/>
            <person name="Town C.D."/>
        </authorList>
    </citation>
    <scope>GENOME REANNOTATION</scope>
    <source>
        <strain>cv. Columbia</strain>
    </source>
</reference>
<reference key="3">
    <citation type="journal article" date="2004" name="Genome Res.">
        <title>Whole genome sequence comparisons and 'full-length' cDNA sequences: a combined approach to evaluate and improve Arabidopsis genome annotation.</title>
        <authorList>
            <person name="Castelli V."/>
            <person name="Aury J.-M."/>
            <person name="Jaillon O."/>
            <person name="Wincker P."/>
            <person name="Clepet C."/>
            <person name="Menard M."/>
            <person name="Cruaud C."/>
            <person name="Quetier F."/>
            <person name="Scarpelli C."/>
            <person name="Schaechter V."/>
            <person name="Temple G."/>
            <person name="Caboche M."/>
            <person name="Weissenbach J."/>
            <person name="Salanoubat M."/>
        </authorList>
    </citation>
    <scope>NUCLEOTIDE SEQUENCE [LARGE SCALE MRNA] (ISOFORM 2)</scope>
    <source>
        <strain>cv. Columbia</strain>
    </source>
</reference>
<reference key="4">
    <citation type="journal article" date="2002" name="Trends Plant Sci.">
        <title>Mitogen-activated protein kinase cascades in plants: a new nomenclature.</title>
        <authorList>
            <consortium name="MAPK group"/>
        </authorList>
    </citation>
    <scope>GENE FAMILY</scope>
    <scope>NOMENCLATURE</scope>
</reference>
<reference key="5">
    <citation type="journal article" date="2006" name="Trends Plant Sci.">
        <title>Ancient signals: comparative genomics of plant MAPK and MAPKK gene families.</title>
        <authorList>
            <person name="Hamel L.P."/>
            <person name="Nicole M.C."/>
            <person name="Sritubtim S."/>
            <person name="Morency M.J."/>
            <person name="Ellis M."/>
            <person name="Ehlting J."/>
            <person name="Beaudoin N."/>
            <person name="Barbazuk B."/>
            <person name="Klessig D."/>
            <person name="Lee J."/>
            <person name="Martin G."/>
            <person name="Mundy J."/>
            <person name="Ohashi Y."/>
            <person name="Scheel D."/>
            <person name="Sheen J."/>
            <person name="Xing T."/>
            <person name="Zhang S."/>
            <person name="Seguin A."/>
            <person name="Ellis B.E."/>
        </authorList>
    </citation>
    <scope>GENE FAMILY</scope>
</reference>
<reference key="6">
    <citation type="journal article" date="2008" name="Plant Signal. Behav.">
        <title>Comprehensive analysis of protein-protein interactions between Arabidopsis MAPKs and MAPK kinases helps define potential MAPK signalling modules.</title>
        <authorList>
            <person name="Lee J.S."/>
            <person name="Huh K.W."/>
            <person name="Bhargava A."/>
            <person name="Ellis B.E."/>
        </authorList>
    </citation>
    <scope>INTERACTION WITH MKK1; MKK2 AND MKK6</scope>
</reference>
<reference key="7">
    <citation type="journal article" date="2011" name="Plant J.">
        <title>AtMPK4 is required for male-specific meiotic cytokinesis in Arabidopsis.</title>
        <authorList>
            <person name="Zeng Q."/>
            <person name="Chen J.G."/>
            <person name="Ellis B.E."/>
        </authorList>
    </citation>
    <scope>INTERACTION WITH MKK6</scope>
</reference>
<organism>
    <name type="scientific">Arabidopsis thaliana</name>
    <name type="common">Mouse-ear cress</name>
    <dbReference type="NCBI Taxonomy" id="3702"/>
    <lineage>
        <taxon>Eukaryota</taxon>
        <taxon>Viridiplantae</taxon>
        <taxon>Streptophyta</taxon>
        <taxon>Embryophyta</taxon>
        <taxon>Tracheophyta</taxon>
        <taxon>Spermatophyta</taxon>
        <taxon>Magnoliopsida</taxon>
        <taxon>eudicotyledons</taxon>
        <taxon>Gunneridae</taxon>
        <taxon>Pentapetalae</taxon>
        <taxon>rosids</taxon>
        <taxon>malvids</taxon>
        <taxon>Brassicales</taxon>
        <taxon>Brassicaceae</taxon>
        <taxon>Camelineae</taxon>
        <taxon>Arabidopsis</taxon>
    </lineage>
</organism>
<evidence type="ECO:0000250" key="1"/>
<evidence type="ECO:0000250" key="2">
    <source>
        <dbReference type="UniProtKB" id="Q39026"/>
    </source>
</evidence>
<evidence type="ECO:0000255" key="3">
    <source>
        <dbReference type="PROSITE-ProRule" id="PRU00159"/>
    </source>
</evidence>
<evidence type="ECO:0000255" key="4">
    <source>
        <dbReference type="PROSITE-ProRule" id="PRU10027"/>
    </source>
</evidence>
<evidence type="ECO:0000269" key="5">
    <source>
    </source>
</evidence>
<evidence type="ECO:0000269" key="6">
    <source>
    </source>
</evidence>
<evidence type="ECO:0000303" key="7">
    <source>
    </source>
</evidence>
<evidence type="ECO:0000305" key="8"/>